<proteinExistence type="inferred from homology"/>
<keyword id="KW-0030">Aminoacyl-tRNA synthetase</keyword>
<keyword id="KW-0067">ATP-binding</keyword>
<keyword id="KW-0963">Cytoplasm</keyword>
<keyword id="KW-0436">Ligase</keyword>
<keyword id="KW-0547">Nucleotide-binding</keyword>
<keyword id="KW-0648">Protein biosynthesis</keyword>
<gene>
    <name evidence="1" type="primary">serS</name>
    <name type="ordered locus">LGAS_1621</name>
</gene>
<evidence type="ECO:0000255" key="1">
    <source>
        <dbReference type="HAMAP-Rule" id="MF_00176"/>
    </source>
</evidence>
<evidence type="ECO:0000256" key="2">
    <source>
        <dbReference type="SAM" id="MobiDB-lite"/>
    </source>
</evidence>
<dbReference type="EC" id="6.1.1.11" evidence="1"/>
<dbReference type="EMBL" id="CP000413">
    <property type="protein sequence ID" value="ABJ60917.1"/>
    <property type="molecule type" value="Genomic_DNA"/>
</dbReference>
<dbReference type="RefSeq" id="WP_003646807.1">
    <property type="nucleotide sequence ID" value="NZ_WBMG01000009.1"/>
</dbReference>
<dbReference type="SMR" id="Q041F5"/>
<dbReference type="GeneID" id="29639920"/>
<dbReference type="KEGG" id="lga:LGAS_1621"/>
<dbReference type="HOGENOM" id="CLU_023797_1_1_9"/>
<dbReference type="BioCyc" id="LGAS324831:G1G6Y-1616-MONOMER"/>
<dbReference type="UniPathway" id="UPA00906">
    <property type="reaction ID" value="UER00895"/>
</dbReference>
<dbReference type="Proteomes" id="UP000000664">
    <property type="component" value="Chromosome"/>
</dbReference>
<dbReference type="GO" id="GO:0005737">
    <property type="term" value="C:cytoplasm"/>
    <property type="evidence" value="ECO:0007669"/>
    <property type="project" value="UniProtKB-SubCell"/>
</dbReference>
<dbReference type="GO" id="GO:0005524">
    <property type="term" value="F:ATP binding"/>
    <property type="evidence" value="ECO:0007669"/>
    <property type="project" value="UniProtKB-UniRule"/>
</dbReference>
<dbReference type="GO" id="GO:0140096">
    <property type="term" value="F:catalytic activity, acting on a protein"/>
    <property type="evidence" value="ECO:0007669"/>
    <property type="project" value="UniProtKB-ARBA"/>
</dbReference>
<dbReference type="GO" id="GO:0004828">
    <property type="term" value="F:serine-tRNA ligase activity"/>
    <property type="evidence" value="ECO:0007669"/>
    <property type="project" value="UniProtKB-UniRule"/>
</dbReference>
<dbReference type="GO" id="GO:0016740">
    <property type="term" value="F:transferase activity"/>
    <property type="evidence" value="ECO:0007669"/>
    <property type="project" value="UniProtKB-ARBA"/>
</dbReference>
<dbReference type="GO" id="GO:0016260">
    <property type="term" value="P:selenocysteine biosynthetic process"/>
    <property type="evidence" value="ECO:0007669"/>
    <property type="project" value="UniProtKB-UniRule"/>
</dbReference>
<dbReference type="GO" id="GO:0006434">
    <property type="term" value="P:seryl-tRNA aminoacylation"/>
    <property type="evidence" value="ECO:0007669"/>
    <property type="project" value="UniProtKB-UniRule"/>
</dbReference>
<dbReference type="CDD" id="cd00770">
    <property type="entry name" value="SerRS_core"/>
    <property type="match status" value="1"/>
</dbReference>
<dbReference type="Gene3D" id="3.30.930.10">
    <property type="entry name" value="Bira Bifunctional Protein, Domain 2"/>
    <property type="match status" value="1"/>
</dbReference>
<dbReference type="Gene3D" id="1.10.287.40">
    <property type="entry name" value="Serine-tRNA synthetase, tRNA binding domain"/>
    <property type="match status" value="1"/>
</dbReference>
<dbReference type="HAMAP" id="MF_00176">
    <property type="entry name" value="Ser_tRNA_synth_type1"/>
    <property type="match status" value="1"/>
</dbReference>
<dbReference type="InterPro" id="IPR002314">
    <property type="entry name" value="aa-tRNA-synt_IIb"/>
</dbReference>
<dbReference type="InterPro" id="IPR006195">
    <property type="entry name" value="aa-tRNA-synth_II"/>
</dbReference>
<dbReference type="InterPro" id="IPR045864">
    <property type="entry name" value="aa-tRNA-synth_II/BPL/LPL"/>
</dbReference>
<dbReference type="InterPro" id="IPR002317">
    <property type="entry name" value="Ser-tRNA-ligase_type_1"/>
</dbReference>
<dbReference type="InterPro" id="IPR015866">
    <property type="entry name" value="Ser-tRNA-synth_1_N"/>
</dbReference>
<dbReference type="InterPro" id="IPR042103">
    <property type="entry name" value="SerRS_1_N_sf"/>
</dbReference>
<dbReference type="InterPro" id="IPR033729">
    <property type="entry name" value="SerRS_core"/>
</dbReference>
<dbReference type="InterPro" id="IPR010978">
    <property type="entry name" value="tRNA-bd_arm"/>
</dbReference>
<dbReference type="NCBIfam" id="TIGR00414">
    <property type="entry name" value="serS"/>
    <property type="match status" value="1"/>
</dbReference>
<dbReference type="PANTHER" id="PTHR43697:SF1">
    <property type="entry name" value="SERINE--TRNA LIGASE"/>
    <property type="match status" value="1"/>
</dbReference>
<dbReference type="PANTHER" id="PTHR43697">
    <property type="entry name" value="SERYL-TRNA SYNTHETASE"/>
    <property type="match status" value="1"/>
</dbReference>
<dbReference type="Pfam" id="PF02403">
    <property type="entry name" value="Seryl_tRNA_N"/>
    <property type="match status" value="1"/>
</dbReference>
<dbReference type="Pfam" id="PF00587">
    <property type="entry name" value="tRNA-synt_2b"/>
    <property type="match status" value="1"/>
</dbReference>
<dbReference type="PIRSF" id="PIRSF001529">
    <property type="entry name" value="Ser-tRNA-synth_IIa"/>
    <property type="match status" value="1"/>
</dbReference>
<dbReference type="PRINTS" id="PR00981">
    <property type="entry name" value="TRNASYNTHSER"/>
</dbReference>
<dbReference type="SUPFAM" id="SSF55681">
    <property type="entry name" value="Class II aaRS and biotin synthetases"/>
    <property type="match status" value="1"/>
</dbReference>
<dbReference type="SUPFAM" id="SSF46589">
    <property type="entry name" value="tRNA-binding arm"/>
    <property type="match status" value="1"/>
</dbReference>
<dbReference type="PROSITE" id="PS50862">
    <property type="entry name" value="AA_TRNA_LIGASE_II"/>
    <property type="match status" value="1"/>
</dbReference>
<accession>Q041F5</accession>
<reference key="1">
    <citation type="journal article" date="2006" name="Proc. Natl. Acad. Sci. U.S.A.">
        <title>Comparative genomics of the lactic acid bacteria.</title>
        <authorList>
            <person name="Makarova K.S."/>
            <person name="Slesarev A."/>
            <person name="Wolf Y.I."/>
            <person name="Sorokin A."/>
            <person name="Mirkin B."/>
            <person name="Koonin E.V."/>
            <person name="Pavlov A."/>
            <person name="Pavlova N."/>
            <person name="Karamychev V."/>
            <person name="Polouchine N."/>
            <person name="Shakhova V."/>
            <person name="Grigoriev I."/>
            <person name="Lou Y."/>
            <person name="Rohksar D."/>
            <person name="Lucas S."/>
            <person name="Huang K."/>
            <person name="Goodstein D.M."/>
            <person name="Hawkins T."/>
            <person name="Plengvidhya V."/>
            <person name="Welker D."/>
            <person name="Hughes J."/>
            <person name="Goh Y."/>
            <person name="Benson A."/>
            <person name="Baldwin K."/>
            <person name="Lee J.-H."/>
            <person name="Diaz-Muniz I."/>
            <person name="Dosti B."/>
            <person name="Smeianov V."/>
            <person name="Wechter W."/>
            <person name="Barabote R."/>
            <person name="Lorca G."/>
            <person name="Altermann E."/>
            <person name="Barrangou R."/>
            <person name="Ganesan B."/>
            <person name="Xie Y."/>
            <person name="Rawsthorne H."/>
            <person name="Tamir D."/>
            <person name="Parker C."/>
            <person name="Breidt F."/>
            <person name="Broadbent J.R."/>
            <person name="Hutkins R."/>
            <person name="O'Sullivan D."/>
            <person name="Steele J."/>
            <person name="Unlu G."/>
            <person name="Saier M.H. Jr."/>
            <person name="Klaenhammer T."/>
            <person name="Richardson P."/>
            <person name="Kozyavkin S."/>
            <person name="Weimer B.C."/>
            <person name="Mills D.A."/>
        </authorList>
    </citation>
    <scope>NUCLEOTIDE SEQUENCE [LARGE SCALE GENOMIC DNA]</scope>
    <source>
        <strain>ATCC 33323 / DSM 20243 / BCRC 14619 / CIP 102991 / JCM 1131 / KCTC 3163 / NCIMB 11718 / NCTC 13722 / AM63</strain>
    </source>
</reference>
<sequence length="436" mass="49600">MLDIKVIRENLDWSKKKLATRGIKPEELDKLVAIDKERREALTKSEQLKQKRNEVSDQIAQAKRNKEDASDAIKTMREVGKEIKDLDKEVEDLTQKQKYILLRLPNFPADSDPIGPDESYNEEVRKWNEPTKFDFEPKPHWEIGTELNILDWDTAAKVSGARFVYYKGAGALLERAVSNFFLDENTKDGYTEVIPPYLVNDASMQGTGQFPKFTEDVYTIVDNDDPDKPRDLTLIPTAEVPLVNYFRGKILDAKQLPINVTAFSPAFRSEAGSAGRDTRGLIRMHEFRKVEMVKIVDEDSSWDELEKLTHNAEHLLQKLGLPYHVVALSTGDASFTSAKTYDLEVWMPAQDKYREISSCSNCTDFQARRSLIRYRDENGKLHLAHTLNGSGLAVGRTVAAILENYQNEDGTVNVPEALQPYMHGMKVITKEPKFGE</sequence>
<feature type="chain" id="PRO_1000019710" description="Serine--tRNA ligase">
    <location>
        <begin position="1"/>
        <end position="436"/>
    </location>
</feature>
<feature type="region of interest" description="Disordered" evidence="2">
    <location>
        <begin position="43"/>
        <end position="69"/>
    </location>
</feature>
<feature type="compositionally biased region" description="Basic and acidic residues" evidence="2">
    <location>
        <begin position="43"/>
        <end position="55"/>
    </location>
</feature>
<feature type="binding site" evidence="1">
    <location>
        <begin position="237"/>
        <end position="239"/>
    </location>
    <ligand>
        <name>L-serine</name>
        <dbReference type="ChEBI" id="CHEBI:33384"/>
    </ligand>
</feature>
<feature type="binding site" evidence="1">
    <location>
        <begin position="268"/>
        <end position="270"/>
    </location>
    <ligand>
        <name>ATP</name>
        <dbReference type="ChEBI" id="CHEBI:30616"/>
    </ligand>
</feature>
<feature type="binding site" evidence="1">
    <location>
        <position position="291"/>
    </location>
    <ligand>
        <name>L-serine</name>
        <dbReference type="ChEBI" id="CHEBI:33384"/>
    </ligand>
</feature>
<feature type="binding site" evidence="1">
    <location>
        <begin position="355"/>
        <end position="358"/>
    </location>
    <ligand>
        <name>ATP</name>
        <dbReference type="ChEBI" id="CHEBI:30616"/>
    </ligand>
</feature>
<feature type="binding site" evidence="1">
    <location>
        <position position="390"/>
    </location>
    <ligand>
        <name>L-serine</name>
        <dbReference type="ChEBI" id="CHEBI:33384"/>
    </ligand>
</feature>
<protein>
    <recommendedName>
        <fullName evidence="1">Serine--tRNA ligase</fullName>
        <ecNumber evidence="1">6.1.1.11</ecNumber>
    </recommendedName>
    <alternativeName>
        <fullName evidence="1">Seryl-tRNA synthetase</fullName>
        <shortName evidence="1">SerRS</shortName>
    </alternativeName>
    <alternativeName>
        <fullName evidence="1">Seryl-tRNA(Ser/Sec) synthetase</fullName>
    </alternativeName>
</protein>
<organism>
    <name type="scientific">Lactobacillus gasseri (strain ATCC 33323 / DSM 20243 / BCRC 14619 / CIP 102991 / JCM 1131 / KCTC 3163 / NCIMB 11718 / NCTC 13722 / AM63)</name>
    <dbReference type="NCBI Taxonomy" id="324831"/>
    <lineage>
        <taxon>Bacteria</taxon>
        <taxon>Bacillati</taxon>
        <taxon>Bacillota</taxon>
        <taxon>Bacilli</taxon>
        <taxon>Lactobacillales</taxon>
        <taxon>Lactobacillaceae</taxon>
        <taxon>Lactobacillus</taxon>
    </lineage>
</organism>
<comment type="function">
    <text evidence="1">Catalyzes the attachment of serine to tRNA(Ser). Is also able to aminoacylate tRNA(Sec) with serine, to form the misacylated tRNA L-seryl-tRNA(Sec), which will be further converted into selenocysteinyl-tRNA(Sec).</text>
</comment>
<comment type="catalytic activity">
    <reaction evidence="1">
        <text>tRNA(Ser) + L-serine + ATP = L-seryl-tRNA(Ser) + AMP + diphosphate + H(+)</text>
        <dbReference type="Rhea" id="RHEA:12292"/>
        <dbReference type="Rhea" id="RHEA-COMP:9669"/>
        <dbReference type="Rhea" id="RHEA-COMP:9703"/>
        <dbReference type="ChEBI" id="CHEBI:15378"/>
        <dbReference type="ChEBI" id="CHEBI:30616"/>
        <dbReference type="ChEBI" id="CHEBI:33019"/>
        <dbReference type="ChEBI" id="CHEBI:33384"/>
        <dbReference type="ChEBI" id="CHEBI:78442"/>
        <dbReference type="ChEBI" id="CHEBI:78533"/>
        <dbReference type="ChEBI" id="CHEBI:456215"/>
        <dbReference type="EC" id="6.1.1.11"/>
    </reaction>
</comment>
<comment type="catalytic activity">
    <reaction evidence="1">
        <text>tRNA(Sec) + L-serine + ATP = L-seryl-tRNA(Sec) + AMP + diphosphate + H(+)</text>
        <dbReference type="Rhea" id="RHEA:42580"/>
        <dbReference type="Rhea" id="RHEA-COMP:9742"/>
        <dbReference type="Rhea" id="RHEA-COMP:10128"/>
        <dbReference type="ChEBI" id="CHEBI:15378"/>
        <dbReference type="ChEBI" id="CHEBI:30616"/>
        <dbReference type="ChEBI" id="CHEBI:33019"/>
        <dbReference type="ChEBI" id="CHEBI:33384"/>
        <dbReference type="ChEBI" id="CHEBI:78442"/>
        <dbReference type="ChEBI" id="CHEBI:78533"/>
        <dbReference type="ChEBI" id="CHEBI:456215"/>
        <dbReference type="EC" id="6.1.1.11"/>
    </reaction>
</comment>
<comment type="pathway">
    <text evidence="1">Aminoacyl-tRNA biosynthesis; selenocysteinyl-tRNA(Sec) biosynthesis; L-seryl-tRNA(Sec) from L-serine and tRNA(Sec): step 1/1.</text>
</comment>
<comment type="subunit">
    <text evidence="1">Homodimer. The tRNA molecule binds across the dimer.</text>
</comment>
<comment type="subcellular location">
    <subcellularLocation>
        <location evidence="1">Cytoplasm</location>
    </subcellularLocation>
</comment>
<comment type="domain">
    <text evidence="1">Consists of two distinct domains, a catalytic core and a N-terminal extension that is involved in tRNA binding.</text>
</comment>
<comment type="similarity">
    <text evidence="1">Belongs to the class-II aminoacyl-tRNA synthetase family. Type-1 seryl-tRNA synthetase subfamily.</text>
</comment>
<name>SYS_LACGA</name>